<name>NCL2_ORYSJ</name>
<reference key="1">
    <citation type="journal article" date="2005" name="Nature">
        <title>The map-based sequence of the rice genome.</title>
        <authorList>
            <consortium name="International rice genome sequencing project (IRGSP)"/>
        </authorList>
    </citation>
    <scope>NUCLEOTIDE SEQUENCE [LARGE SCALE GENOMIC DNA]</scope>
    <source>
        <strain>cv. Nipponbare</strain>
    </source>
</reference>
<reference key="2">
    <citation type="journal article" date="2008" name="Nucleic Acids Res.">
        <title>The rice annotation project database (RAP-DB): 2008 update.</title>
        <authorList>
            <consortium name="The rice annotation project (RAP)"/>
        </authorList>
    </citation>
    <scope>GENOME REANNOTATION</scope>
    <source>
        <strain>cv. Nipponbare</strain>
    </source>
</reference>
<reference key="3">
    <citation type="journal article" date="2013" name="Rice">
        <title>Improvement of the Oryza sativa Nipponbare reference genome using next generation sequence and optical map data.</title>
        <authorList>
            <person name="Kawahara Y."/>
            <person name="de la Bastide M."/>
            <person name="Hamilton J.P."/>
            <person name="Kanamori H."/>
            <person name="McCombie W.R."/>
            <person name="Ouyang S."/>
            <person name="Schwartz D.C."/>
            <person name="Tanaka T."/>
            <person name="Wu J."/>
            <person name="Zhou S."/>
            <person name="Childs K.L."/>
            <person name="Davidson R.M."/>
            <person name="Lin H."/>
            <person name="Quesada-Ocampo L."/>
            <person name="Vaillancourt B."/>
            <person name="Sakai H."/>
            <person name="Lee S.S."/>
            <person name="Kim J."/>
            <person name="Numa H."/>
            <person name="Itoh T."/>
            <person name="Buell C.R."/>
            <person name="Matsumoto T."/>
        </authorList>
    </citation>
    <scope>GENOME REANNOTATION</scope>
    <source>
        <strain>cv. Nipponbare</strain>
    </source>
</reference>
<reference key="4">
    <citation type="journal article" date="2005" name="PLoS Biol.">
        <title>The genomes of Oryza sativa: a history of duplications.</title>
        <authorList>
            <person name="Yu J."/>
            <person name="Wang J."/>
            <person name="Lin W."/>
            <person name="Li S."/>
            <person name="Li H."/>
            <person name="Zhou J."/>
            <person name="Ni P."/>
            <person name="Dong W."/>
            <person name="Hu S."/>
            <person name="Zeng C."/>
            <person name="Zhang J."/>
            <person name="Zhang Y."/>
            <person name="Li R."/>
            <person name="Xu Z."/>
            <person name="Li S."/>
            <person name="Li X."/>
            <person name="Zheng H."/>
            <person name="Cong L."/>
            <person name="Lin L."/>
            <person name="Yin J."/>
            <person name="Geng J."/>
            <person name="Li G."/>
            <person name="Shi J."/>
            <person name="Liu J."/>
            <person name="Lv H."/>
            <person name="Li J."/>
            <person name="Wang J."/>
            <person name="Deng Y."/>
            <person name="Ran L."/>
            <person name="Shi X."/>
            <person name="Wang X."/>
            <person name="Wu Q."/>
            <person name="Li C."/>
            <person name="Ren X."/>
            <person name="Wang J."/>
            <person name="Wang X."/>
            <person name="Li D."/>
            <person name="Liu D."/>
            <person name="Zhang X."/>
            <person name="Ji Z."/>
            <person name="Zhao W."/>
            <person name="Sun Y."/>
            <person name="Zhang Z."/>
            <person name="Bao J."/>
            <person name="Han Y."/>
            <person name="Dong L."/>
            <person name="Ji J."/>
            <person name="Chen P."/>
            <person name="Wu S."/>
            <person name="Liu J."/>
            <person name="Xiao Y."/>
            <person name="Bu D."/>
            <person name="Tan J."/>
            <person name="Yang L."/>
            <person name="Ye C."/>
            <person name="Zhang J."/>
            <person name="Xu J."/>
            <person name="Zhou Y."/>
            <person name="Yu Y."/>
            <person name="Zhang B."/>
            <person name="Zhuang S."/>
            <person name="Wei H."/>
            <person name="Liu B."/>
            <person name="Lei M."/>
            <person name="Yu H."/>
            <person name="Li Y."/>
            <person name="Xu H."/>
            <person name="Wei S."/>
            <person name="He X."/>
            <person name="Fang L."/>
            <person name="Zhang Z."/>
            <person name="Zhang Y."/>
            <person name="Huang X."/>
            <person name="Su Z."/>
            <person name="Tong W."/>
            <person name="Li J."/>
            <person name="Tong Z."/>
            <person name="Li S."/>
            <person name="Ye J."/>
            <person name="Wang L."/>
            <person name="Fang L."/>
            <person name="Lei T."/>
            <person name="Chen C.-S."/>
            <person name="Chen H.-C."/>
            <person name="Xu Z."/>
            <person name="Li H."/>
            <person name="Huang H."/>
            <person name="Zhang F."/>
            <person name="Xu H."/>
            <person name="Li N."/>
            <person name="Zhao C."/>
            <person name="Li S."/>
            <person name="Dong L."/>
            <person name="Huang Y."/>
            <person name="Li L."/>
            <person name="Xi Y."/>
            <person name="Qi Q."/>
            <person name="Li W."/>
            <person name="Zhang B."/>
            <person name="Hu W."/>
            <person name="Zhang Y."/>
            <person name="Tian X."/>
            <person name="Jiao Y."/>
            <person name="Liang X."/>
            <person name="Jin J."/>
            <person name="Gao L."/>
            <person name="Zheng W."/>
            <person name="Hao B."/>
            <person name="Liu S.-M."/>
            <person name="Wang W."/>
            <person name="Yuan L."/>
            <person name="Cao M."/>
            <person name="McDermott J."/>
            <person name="Samudrala R."/>
            <person name="Wang J."/>
            <person name="Wong G.K.-S."/>
            <person name="Yang H."/>
        </authorList>
    </citation>
    <scope>NUCLEOTIDE SEQUENCE [LARGE SCALE GENOMIC DNA]</scope>
    <source>
        <strain>cv. Nipponbare</strain>
    </source>
</reference>
<reference key="5">
    <citation type="journal article" date="2014" name="FEBS J.">
        <title>Genome-wide expressional and functional analysis of calcium transport elements during abiotic stress and development in rice.</title>
        <authorList>
            <person name="Singh A."/>
            <person name="Kanwar P."/>
            <person name="Yadav A.K."/>
            <person name="Mishra M."/>
            <person name="Jha S.K."/>
            <person name="Baranwal V."/>
            <person name="Pandey A."/>
            <person name="Kapoor S."/>
            <person name="Tyagi A.K."/>
            <person name="Pandey G.K."/>
        </authorList>
    </citation>
    <scope>INDUCTION</scope>
</reference>
<sequence>MAPPPPPTRCLPVLLLLLLVVAPLLAHGRRPFISDGGNANANANASVLRLPSAAAAAGEDMGCEMSYGFLPCTTTAWGNLFLVLAYGFLMFKSATYLSSGSEMLLQILGPGIVGGLFLPILGALPDALLILVSGLSGTKEVAQSQVLIGMGLLAGSTVMLLTLLWGSCVVVGKCDLSENSTAIDSRDTKGFSLLGSGVSTDKQTSYAARIMAISILPFIIVQIPKIFKLHSGHQITVLIGLIVAALLLLSYCLYQVFQPWIQRRRLEYTRLKHVMSGLLRHAQKHSIGRLLDDEGRPNVSVIEKLFHRIDQDNDGKLERGELQAFIVGINFEDIDWNSNLAADQVMADFDTSRNHFIEKGEFVNGMLRWLDEAKRTVTSGAYSKKFLNDFHARTRDEQTGLLDKDEEEGEADGNPTWTCIKAILLLLLGTAMAAASADPLVDAVHNFSNATHIPSFFISFIVMPLATNSSEAVSAIIFASRKKKRTLSLTFSEVYGGVTMNNTLCLAVFLALVYVRGLTWDFSSEVLIILLVCIIMGLFTSFRTDFPLWTCFVAFLLYPLSLIMVYILDYKFGWS</sequence>
<feature type="chain" id="PRO_0000439590" description="Sodium/calcium exchanger NCL2">
    <location>
        <begin position="1"/>
        <end position="575"/>
    </location>
</feature>
<feature type="transmembrane region" description="Helical" evidence="2">
    <location>
        <begin position="69"/>
        <end position="89"/>
    </location>
</feature>
<feature type="transmembrane region" description="Helical" evidence="2">
    <location>
        <begin position="112"/>
        <end position="132"/>
    </location>
</feature>
<feature type="transmembrane region" description="Helical" evidence="2">
    <location>
        <begin position="146"/>
        <end position="166"/>
    </location>
</feature>
<feature type="transmembrane region" description="Helical" evidence="2">
    <location>
        <begin position="210"/>
        <end position="230"/>
    </location>
</feature>
<feature type="transmembrane region" description="Helical" evidence="2">
    <location>
        <begin position="237"/>
        <end position="257"/>
    </location>
</feature>
<feature type="transmembrane region" description="Helical" evidence="2">
    <location>
        <begin position="417"/>
        <end position="437"/>
    </location>
</feature>
<feature type="transmembrane region" description="Helical" evidence="2">
    <location>
        <begin position="457"/>
        <end position="477"/>
    </location>
</feature>
<feature type="transmembrane region" description="Helical" evidence="2">
    <location>
        <begin position="494"/>
        <end position="514"/>
    </location>
</feature>
<feature type="transmembrane region" description="Helical" evidence="2">
    <location>
        <begin position="522"/>
        <end position="542"/>
    </location>
</feature>
<feature type="transmembrane region" description="Helical" evidence="2">
    <location>
        <begin position="548"/>
        <end position="568"/>
    </location>
</feature>
<feature type="domain" description="EF-hand 1" evidence="3">
    <location>
        <begin position="297"/>
        <end position="332"/>
    </location>
</feature>
<feature type="domain" description="EF-hand 2" evidence="3">
    <location>
        <begin position="337"/>
        <end position="372"/>
    </location>
</feature>
<feature type="binding site" evidence="3">
    <location>
        <position position="310"/>
    </location>
    <ligand>
        <name>Ca(2+)</name>
        <dbReference type="ChEBI" id="CHEBI:29108"/>
        <label>1</label>
    </ligand>
</feature>
<feature type="binding site" evidence="3">
    <location>
        <position position="312"/>
    </location>
    <ligand>
        <name>Ca(2+)</name>
        <dbReference type="ChEBI" id="CHEBI:29108"/>
        <label>1</label>
    </ligand>
</feature>
<feature type="binding site" evidence="3">
    <location>
        <position position="314"/>
    </location>
    <ligand>
        <name>Ca(2+)</name>
        <dbReference type="ChEBI" id="CHEBI:29108"/>
        <label>1</label>
    </ligand>
</feature>
<feature type="binding site" evidence="3">
    <location>
        <position position="316"/>
    </location>
    <ligand>
        <name>Ca(2+)</name>
        <dbReference type="ChEBI" id="CHEBI:29108"/>
        <label>1</label>
    </ligand>
</feature>
<feature type="binding site" evidence="3">
    <location>
        <position position="321"/>
    </location>
    <ligand>
        <name>Ca(2+)</name>
        <dbReference type="ChEBI" id="CHEBI:29108"/>
        <label>1</label>
    </ligand>
</feature>
<feature type="binding site" evidence="3">
    <location>
        <position position="350"/>
    </location>
    <ligand>
        <name>Ca(2+)</name>
        <dbReference type="ChEBI" id="CHEBI:29108"/>
        <label>2</label>
    </ligand>
</feature>
<feature type="binding site" evidence="3">
    <location>
        <position position="352"/>
    </location>
    <ligand>
        <name>Ca(2+)</name>
        <dbReference type="ChEBI" id="CHEBI:29108"/>
        <label>2</label>
    </ligand>
</feature>
<feature type="binding site" evidence="3">
    <location>
        <position position="354"/>
    </location>
    <ligand>
        <name>Ca(2+)</name>
        <dbReference type="ChEBI" id="CHEBI:29108"/>
        <label>2</label>
    </ligand>
</feature>
<feature type="binding site" evidence="3">
    <location>
        <position position="361"/>
    </location>
    <ligand>
        <name>Ca(2+)</name>
        <dbReference type="ChEBI" id="CHEBI:29108"/>
        <label>2</label>
    </ligand>
</feature>
<feature type="glycosylation site" description="N-linked (GlcNAc...) asparagine" evidence="4">
    <location>
        <position position="179"/>
    </location>
</feature>
<feature type="glycosylation site" description="N-linked (GlcNAc...) asparagine" evidence="4">
    <location>
        <position position="298"/>
    </location>
</feature>
<keyword id="KW-0050">Antiport</keyword>
<keyword id="KW-0106">Calcium</keyword>
<keyword id="KW-0109">Calcium transport</keyword>
<keyword id="KW-1003">Cell membrane</keyword>
<keyword id="KW-0325">Glycoprotein</keyword>
<keyword id="KW-0406">Ion transport</keyword>
<keyword id="KW-0472">Membrane</keyword>
<keyword id="KW-0479">Metal-binding</keyword>
<keyword id="KW-1185">Reference proteome</keyword>
<keyword id="KW-0677">Repeat</keyword>
<keyword id="KW-0915">Sodium</keyword>
<keyword id="KW-0739">Sodium transport</keyword>
<keyword id="KW-0346">Stress response</keyword>
<keyword id="KW-0812">Transmembrane</keyword>
<keyword id="KW-1133">Transmembrane helix</keyword>
<keyword id="KW-0813">Transport</keyword>
<evidence type="ECO:0000250" key="1">
    <source>
        <dbReference type="UniProtKB" id="Q8L636"/>
    </source>
</evidence>
<evidence type="ECO:0000255" key="2"/>
<evidence type="ECO:0000255" key="3">
    <source>
        <dbReference type="PROSITE-ProRule" id="PRU00448"/>
    </source>
</evidence>
<evidence type="ECO:0000255" key="4">
    <source>
        <dbReference type="PROSITE-ProRule" id="PRU00498"/>
    </source>
</evidence>
<evidence type="ECO:0000269" key="5">
    <source>
    </source>
</evidence>
<evidence type="ECO:0000303" key="6">
    <source>
    </source>
</evidence>
<evidence type="ECO:0000305" key="7"/>
<evidence type="ECO:0000312" key="8">
    <source>
        <dbReference type="EMBL" id="BAD19782.1"/>
    </source>
</evidence>
<evidence type="ECO:0000312" key="9">
    <source>
        <dbReference type="EMBL" id="BAD19956.1"/>
    </source>
</evidence>
<evidence type="ECO:0000312" key="10">
    <source>
        <dbReference type="EMBL" id="BAS77886.1"/>
    </source>
</evidence>
<evidence type="ECO:0000312" key="11">
    <source>
        <dbReference type="EMBL" id="EEE56655.1"/>
    </source>
</evidence>
<proteinExistence type="evidence at transcript level"/>
<dbReference type="EMBL" id="AP005511">
    <property type="protein sequence ID" value="BAD19782.1"/>
    <property type="status" value="ALT_SEQ"/>
    <property type="molecule type" value="Genomic_DNA"/>
</dbReference>
<dbReference type="EMBL" id="AP005614">
    <property type="protein sequence ID" value="BAD19956.1"/>
    <property type="status" value="ALT_SEQ"/>
    <property type="molecule type" value="Genomic_DNA"/>
</dbReference>
<dbReference type="EMBL" id="AP008208">
    <property type="protein sequence ID" value="BAF08346.2"/>
    <property type="status" value="ALT_SEQ"/>
    <property type="molecule type" value="Genomic_DNA"/>
</dbReference>
<dbReference type="EMBL" id="AP014958">
    <property type="protein sequence ID" value="BAS77886.1"/>
    <property type="status" value="ALT_SEQ"/>
    <property type="molecule type" value="Genomic_DNA"/>
</dbReference>
<dbReference type="EMBL" id="CM000139">
    <property type="protein sequence ID" value="EEE56655.1"/>
    <property type="molecule type" value="Genomic_DNA"/>
</dbReference>
<dbReference type="FunCoup" id="Q6K3R5">
    <property type="interactions" value="801"/>
</dbReference>
<dbReference type="GlyCosmos" id="Q6K3R5">
    <property type="glycosylation" value="2 sites, No reported glycans"/>
</dbReference>
<dbReference type="PaxDb" id="39947-Q6K3R5"/>
<dbReference type="KEGG" id="dosa:Os02g0247800"/>
<dbReference type="KEGG" id="osa:4328874"/>
<dbReference type="eggNOG" id="ENOG502QV8Y">
    <property type="taxonomic scope" value="Eukaryota"/>
</dbReference>
<dbReference type="InParanoid" id="Q6K3R5"/>
<dbReference type="OrthoDB" id="26525at2759"/>
<dbReference type="Proteomes" id="UP000000763">
    <property type="component" value="Chromosome 2"/>
</dbReference>
<dbReference type="Proteomes" id="UP000007752">
    <property type="component" value="Chromosome 2"/>
</dbReference>
<dbReference type="Proteomes" id="UP000059680">
    <property type="component" value="Chromosome 2"/>
</dbReference>
<dbReference type="GO" id="GO:0005886">
    <property type="term" value="C:plasma membrane"/>
    <property type="evidence" value="ECO:0007669"/>
    <property type="project" value="UniProtKB-SubCell"/>
</dbReference>
<dbReference type="GO" id="GO:0005774">
    <property type="term" value="C:vacuolar membrane"/>
    <property type="evidence" value="ECO:0007669"/>
    <property type="project" value="UniProtKB-ARBA"/>
</dbReference>
<dbReference type="GO" id="GO:0005509">
    <property type="term" value="F:calcium ion binding"/>
    <property type="evidence" value="ECO:0007669"/>
    <property type="project" value="InterPro"/>
</dbReference>
<dbReference type="GO" id="GO:0015369">
    <property type="term" value="F:calcium:proton antiporter activity"/>
    <property type="evidence" value="ECO:0000318"/>
    <property type="project" value="GO_Central"/>
</dbReference>
<dbReference type="GO" id="GO:0070588">
    <property type="term" value="P:calcium ion transmembrane transport"/>
    <property type="evidence" value="ECO:0000318"/>
    <property type="project" value="GO_Central"/>
</dbReference>
<dbReference type="GO" id="GO:0006874">
    <property type="term" value="P:intracellular calcium ion homeostasis"/>
    <property type="evidence" value="ECO:0000318"/>
    <property type="project" value="GO_Central"/>
</dbReference>
<dbReference type="GO" id="GO:0006814">
    <property type="term" value="P:sodium ion transport"/>
    <property type="evidence" value="ECO:0007669"/>
    <property type="project" value="UniProtKB-KW"/>
</dbReference>
<dbReference type="CDD" id="cd00051">
    <property type="entry name" value="EFh"/>
    <property type="match status" value="1"/>
</dbReference>
<dbReference type="FunFam" id="1.10.238.10:FF:000361">
    <property type="entry name" value="Sodium/calcium exchanger NCL2"/>
    <property type="match status" value="1"/>
</dbReference>
<dbReference type="FunFam" id="1.20.1420.30:FF:000019">
    <property type="entry name" value="Sodium/calcium exchanger NCL2"/>
    <property type="match status" value="1"/>
</dbReference>
<dbReference type="Gene3D" id="1.10.238.10">
    <property type="entry name" value="EF-hand"/>
    <property type="match status" value="1"/>
</dbReference>
<dbReference type="Gene3D" id="1.20.1420.30">
    <property type="entry name" value="NCX, central ion-binding region"/>
    <property type="match status" value="1"/>
</dbReference>
<dbReference type="InterPro" id="IPR004713">
    <property type="entry name" value="CaH_exchang"/>
</dbReference>
<dbReference type="InterPro" id="IPR011992">
    <property type="entry name" value="EF-hand-dom_pair"/>
</dbReference>
<dbReference type="InterPro" id="IPR018247">
    <property type="entry name" value="EF_Hand_1_Ca_BS"/>
</dbReference>
<dbReference type="InterPro" id="IPR002048">
    <property type="entry name" value="EF_hand_dom"/>
</dbReference>
<dbReference type="InterPro" id="IPR004837">
    <property type="entry name" value="NaCa_Exmemb"/>
</dbReference>
<dbReference type="InterPro" id="IPR044880">
    <property type="entry name" value="NCX_ion-bd_dom_sf"/>
</dbReference>
<dbReference type="PANTHER" id="PTHR31503:SF36">
    <property type="entry name" value="SODIUM_CALCIUM EXCHANGER MEMBRANE REGION DOMAIN-CONTAINING PROTEIN"/>
    <property type="match status" value="1"/>
</dbReference>
<dbReference type="PANTHER" id="PTHR31503">
    <property type="entry name" value="VACUOLAR CALCIUM ION TRANSPORTER"/>
    <property type="match status" value="1"/>
</dbReference>
<dbReference type="Pfam" id="PF13499">
    <property type="entry name" value="EF-hand_7"/>
    <property type="match status" value="1"/>
</dbReference>
<dbReference type="Pfam" id="PF01699">
    <property type="entry name" value="Na_Ca_ex"/>
    <property type="match status" value="2"/>
</dbReference>
<dbReference type="SMART" id="SM00054">
    <property type="entry name" value="EFh"/>
    <property type="match status" value="2"/>
</dbReference>
<dbReference type="SUPFAM" id="SSF47473">
    <property type="entry name" value="EF-hand"/>
    <property type="match status" value="1"/>
</dbReference>
<dbReference type="PROSITE" id="PS00018">
    <property type="entry name" value="EF_HAND_1"/>
    <property type="match status" value="2"/>
</dbReference>
<dbReference type="PROSITE" id="PS50222">
    <property type="entry name" value="EF_HAND_2"/>
    <property type="match status" value="2"/>
</dbReference>
<comment type="function">
    <text evidence="1">May function as a sodium/calcium exchanger (NCX) and participate in the maintenance of calcium homeostasis. May play a role abiotic stress responses.</text>
</comment>
<comment type="subcellular location">
    <subcellularLocation>
        <location evidence="7">Cell membrane</location>
        <topology evidence="2">Multi-pass membrane protein</topology>
    </subcellularLocation>
</comment>
<comment type="induction">
    <text evidence="5">Induced by drought stress.</text>
</comment>
<comment type="similarity">
    <text evidence="7">Belongs to the Ca(2+):cation antiporter (CaCA) (TC 2.A.19) family.</text>
</comment>
<comment type="sequence caution" evidence="7">
    <conflict type="erroneous gene model prediction">
        <sequence resource="EMBL-CDS" id="BAD19782"/>
    </conflict>
</comment>
<comment type="sequence caution" evidence="7">
    <conflict type="erroneous gene model prediction">
        <sequence resource="EMBL-CDS" id="BAD19956"/>
    </conflict>
</comment>
<comment type="sequence caution" evidence="7">
    <conflict type="erroneous gene model prediction">
        <sequence resource="EMBL-CDS" id="BAF08346"/>
    </conflict>
</comment>
<comment type="sequence caution" evidence="7">
    <conflict type="erroneous gene model prediction">
        <sequence resource="EMBL-CDS" id="BAS77886"/>
    </conflict>
</comment>
<protein>
    <recommendedName>
        <fullName evidence="7">Sodium/calcium exchanger NCL2</fullName>
    </recommendedName>
    <alternativeName>
        <fullName evidence="7">Na(+)/Ca(2+)-exchange protein NCL2</fullName>
    </alternativeName>
    <alternativeName>
        <fullName evidence="6">OsEFCAX2</fullName>
    </alternativeName>
    <alternativeName>
        <fullName evidence="7">Protein NCX-like 2</fullName>
        <shortName evidence="7">OsNCL2</shortName>
    </alternativeName>
</protein>
<accession>Q6K3R5</accession>
<accession>A0A0P0VH04</accession>
<accession>B9F4S4</accession>
<accession>Q0E2E2</accession>
<organism>
    <name type="scientific">Oryza sativa subsp. japonica</name>
    <name type="common">Rice</name>
    <dbReference type="NCBI Taxonomy" id="39947"/>
    <lineage>
        <taxon>Eukaryota</taxon>
        <taxon>Viridiplantae</taxon>
        <taxon>Streptophyta</taxon>
        <taxon>Embryophyta</taxon>
        <taxon>Tracheophyta</taxon>
        <taxon>Spermatophyta</taxon>
        <taxon>Magnoliopsida</taxon>
        <taxon>Liliopsida</taxon>
        <taxon>Poales</taxon>
        <taxon>Poaceae</taxon>
        <taxon>BOP clade</taxon>
        <taxon>Oryzoideae</taxon>
        <taxon>Oryzeae</taxon>
        <taxon>Oryzinae</taxon>
        <taxon>Oryza</taxon>
        <taxon>Oryza sativa</taxon>
    </lineage>
</organism>
<gene>
    <name evidence="7" type="primary">NCL2</name>
    <name evidence="10" type="ordered locus">Os02g0247800</name>
    <name evidence="7" type="ordered locus">LOC_Os02g14980</name>
    <name evidence="11" type="ORF">OsJ_06069</name>
    <name evidence="8" type="ORF">OSJNBa0011N12.6</name>
    <name evidence="9" type="ORF">OSJNBa0090H18.33</name>
</gene>